<gene>
    <name type="primary">RB1</name>
</gene>
<keyword id="KW-0131">Cell cycle</keyword>
<keyword id="KW-0539">Nucleus</keyword>
<keyword id="KW-1185">Reference proteome</keyword>
<keyword id="KW-0678">Repressor</keyword>
<keyword id="KW-0804">Transcription</keyword>
<keyword id="KW-0805">Transcription regulation</keyword>
<comment type="function">
    <text evidence="1">Regulator of biological processes that recruits a histone deacetylase to control gene transcription. May play a role in the entry into mitosis, negatively regulating the cell proliferation. Formation of stable complexes with geminiviridae replication-associated proteins may create a cellular environment which favors viral DNA replication (By similarity).</text>
</comment>
<comment type="subcellular location">
    <subcellularLocation>
        <location evidence="1">Nucleus</location>
    </subcellularLocation>
</comment>
<comment type="similarity">
    <text evidence="3">Belongs to the retinoblastoma protein (RB) family.</text>
</comment>
<organism>
    <name type="scientific">Nicotiana tabacum</name>
    <name type="common">Common tobacco</name>
    <dbReference type="NCBI Taxonomy" id="4097"/>
    <lineage>
        <taxon>Eukaryota</taxon>
        <taxon>Viridiplantae</taxon>
        <taxon>Streptophyta</taxon>
        <taxon>Embryophyta</taxon>
        <taxon>Tracheophyta</taxon>
        <taxon>Spermatophyta</taxon>
        <taxon>Magnoliopsida</taxon>
        <taxon>eudicotyledons</taxon>
        <taxon>Gunneridae</taxon>
        <taxon>Pentapetalae</taxon>
        <taxon>asterids</taxon>
        <taxon>lamiids</taxon>
        <taxon>Solanales</taxon>
        <taxon>Solanaceae</taxon>
        <taxon>Nicotianoideae</taxon>
        <taxon>Nicotianeae</taxon>
        <taxon>Nicotiana</taxon>
    </lineage>
</organism>
<reference key="1">
    <citation type="submission" date="1998-06" db="EMBL/GenBank/DDBJ databases">
        <title>Tumor suppressor gene.</title>
        <authorList>
            <person name="Sekine M."/>
        </authorList>
    </citation>
    <scope>NUCLEOTIDE SEQUENCE [MRNA]</scope>
</reference>
<name>RBR1_TOBAC</name>
<protein>
    <recommendedName>
        <fullName>Retinoblastoma-related protein 1</fullName>
        <shortName>NtRb1</shortName>
    </recommendedName>
</protein>
<sequence>MVELNNCSNSEENGCVDSLEVRFTDFCKNGLSMGESFVTEATKLFNDSKHLLLSNNSTIGVITEGVERYWFVFVLYSVKRLSEKEVGNSSNGNEGNAFSLCQILRGAKLNVVDFFKELPQFILKVGPTLSNLYGSDWEKRLEAKELQTNFVHLSLLSKYYKRAYQELFLASGNNEDKPSATSSSAIHLPQYYRFGWLLFLSLRIHVFSRFKDLVTCTNGLVSVLAILIIHVPVRFRNFNINDSSRFVKKGDKVDLLASLGKIYQTSIDDLRETMDKVNYLITEKLKKKPCLASEFRTENLDNLDTDGLTYFEDLMEESCLPSSVSILEKDYSDAIQNKGELDERIFVNEEDSLLGSGSLSGGVVNMNGVKRKFDAMASPAKTVTSTLSPYRSPNCANSKMTVATPVSTAMTTARWLRTVIAPLQPKPSAELERFLSSCDRDVTADVIRRAQIILEAIFPSSGPAEHCAAGGSLQSTSLMDNIWAEQRTSEALKLYYRVLQTMCTAESQILNGNNLTSLLTNERFHRCMLACSAELVLATHKTVTMLFPAVLERTGITAFDLSKVIESFIRHEESLPRELRRHLNSLEERLLESMVWEKGSSMYNSLAVAKPSLAAEINRTGLLAEPMPSLDAIAMHINLSSGSLPPLPSLHKNNLAPNGQIGDIRSPKKVCSEYRSVLVERNSFTSPVKDRFLALNNIKSKFPPPALQSAFASPTRPNPGGGGETCAETAINVFFGKIVKLAAVRINGMIERLQLSQQIRETVYCLFQKILSQRTSLFFNRHIDQIILCSFYGVAKRTGADHVDIITFYNEMFIPSVKPLLVELAPAGNAEKNNHNDGQGPASPKPSPFPKLPDMSPKKVSAVHNVYVSPLRASKMDALISHSSKSYYACVGESTHAYQSPSKDLDVINNRLNGNRKLRGALNFDVDAGLVSDSIVANSLYLQNGNCRSPVAHVKTEQPES</sequence>
<feature type="chain" id="PRO_0000380242" description="Retinoblastoma-related protein 1">
    <location>
        <begin position="1"/>
        <end position="961"/>
    </location>
</feature>
<feature type="region of interest" description="Pocket" evidence="1">
    <location>
        <begin position="404"/>
        <end position="819"/>
    </location>
</feature>
<feature type="region of interest" description="Domain A" evidence="1">
    <location>
        <begin position="404"/>
        <end position="606"/>
    </location>
</feature>
<feature type="region of interest" description="Spacer" evidence="1">
    <location>
        <begin position="607"/>
        <end position="728"/>
    </location>
</feature>
<feature type="region of interest" description="Domain B" evidence="1">
    <location>
        <begin position="729"/>
        <end position="819"/>
    </location>
</feature>
<feature type="region of interest" description="Disordered" evidence="2">
    <location>
        <begin position="829"/>
        <end position="856"/>
    </location>
</feature>
<accession>Q9SXN6</accession>
<dbReference type="EMBL" id="AB015221">
    <property type="protein sequence ID" value="BAA76477.1"/>
    <property type="molecule type" value="mRNA"/>
</dbReference>
<dbReference type="RefSeq" id="NP_001312168.1">
    <property type="nucleotide sequence ID" value="NM_001325239.1"/>
</dbReference>
<dbReference type="SMR" id="Q9SXN6"/>
<dbReference type="STRING" id="4097.Q9SXN6"/>
<dbReference type="PaxDb" id="4097-Q9SXN6"/>
<dbReference type="GeneID" id="107777437"/>
<dbReference type="KEGG" id="nta:107777437"/>
<dbReference type="OrthoDB" id="844594at2759"/>
<dbReference type="Proteomes" id="UP000084051">
    <property type="component" value="Unplaced"/>
</dbReference>
<dbReference type="GO" id="GO:0000785">
    <property type="term" value="C:chromatin"/>
    <property type="evidence" value="ECO:0000318"/>
    <property type="project" value="GO_Central"/>
</dbReference>
<dbReference type="GO" id="GO:0005634">
    <property type="term" value="C:nucleus"/>
    <property type="evidence" value="ECO:0007669"/>
    <property type="project" value="UniProtKB-SubCell"/>
</dbReference>
<dbReference type="GO" id="GO:0005667">
    <property type="term" value="C:transcription regulator complex"/>
    <property type="evidence" value="ECO:0000318"/>
    <property type="project" value="GO_Central"/>
</dbReference>
<dbReference type="GO" id="GO:0000977">
    <property type="term" value="F:RNA polymerase II transcription regulatory region sequence-specific DNA binding"/>
    <property type="evidence" value="ECO:0000318"/>
    <property type="project" value="GO_Central"/>
</dbReference>
<dbReference type="GO" id="GO:0030154">
    <property type="term" value="P:cell differentiation"/>
    <property type="evidence" value="ECO:0000318"/>
    <property type="project" value="GO_Central"/>
</dbReference>
<dbReference type="GO" id="GO:2000134">
    <property type="term" value="P:negative regulation of G1/S transition of mitotic cell cycle"/>
    <property type="evidence" value="ECO:0000318"/>
    <property type="project" value="GO_Central"/>
</dbReference>
<dbReference type="GO" id="GO:0006357">
    <property type="term" value="P:regulation of transcription by RNA polymerase II"/>
    <property type="evidence" value="ECO:0007669"/>
    <property type="project" value="InterPro"/>
</dbReference>
<dbReference type="FunFam" id="1.10.472.10:FF:000030">
    <property type="entry name" value="Retinoblastoma-related protein 1"/>
    <property type="match status" value="1"/>
</dbReference>
<dbReference type="FunFam" id="1.10.472.140:FF:000003">
    <property type="entry name" value="Retinoblastoma-related protein 1"/>
    <property type="match status" value="1"/>
</dbReference>
<dbReference type="Gene3D" id="1.10.472.140">
    <property type="match status" value="1"/>
</dbReference>
<dbReference type="Gene3D" id="1.10.472.10">
    <property type="entry name" value="Cyclin-like"/>
    <property type="match status" value="2"/>
</dbReference>
<dbReference type="InterPro" id="IPR036915">
    <property type="entry name" value="Cyclin-like_sf"/>
</dbReference>
<dbReference type="InterPro" id="IPR002720">
    <property type="entry name" value="RB_A"/>
</dbReference>
<dbReference type="InterPro" id="IPR002719">
    <property type="entry name" value="RB_B"/>
</dbReference>
<dbReference type="InterPro" id="IPR028309">
    <property type="entry name" value="RB_fam"/>
</dbReference>
<dbReference type="InterPro" id="IPR024599">
    <property type="entry name" value="RB_N"/>
</dbReference>
<dbReference type="PANTHER" id="PTHR13742:SF17">
    <property type="entry name" value="RE32990P-RELATED"/>
    <property type="match status" value="1"/>
</dbReference>
<dbReference type="PANTHER" id="PTHR13742">
    <property type="entry name" value="RETINOBLASTOMA-ASSOCIATED PROTEIN RB -RELATED"/>
    <property type="match status" value="1"/>
</dbReference>
<dbReference type="Pfam" id="PF11934">
    <property type="entry name" value="DUF3452"/>
    <property type="match status" value="1"/>
</dbReference>
<dbReference type="Pfam" id="PF01858">
    <property type="entry name" value="RB_A"/>
    <property type="match status" value="1"/>
</dbReference>
<dbReference type="Pfam" id="PF01857">
    <property type="entry name" value="RB_B"/>
    <property type="match status" value="1"/>
</dbReference>
<dbReference type="SMART" id="SM01367">
    <property type="entry name" value="DUF3452"/>
    <property type="match status" value="1"/>
</dbReference>
<dbReference type="SMART" id="SM01368">
    <property type="entry name" value="RB_A"/>
    <property type="match status" value="1"/>
</dbReference>
<dbReference type="SUPFAM" id="SSF47954">
    <property type="entry name" value="Cyclin-like"/>
    <property type="match status" value="2"/>
</dbReference>
<proteinExistence type="evidence at transcript level"/>
<evidence type="ECO:0000250" key="1"/>
<evidence type="ECO:0000256" key="2">
    <source>
        <dbReference type="SAM" id="MobiDB-lite"/>
    </source>
</evidence>
<evidence type="ECO:0000305" key="3"/>